<evidence type="ECO:0000250" key="1">
    <source>
        <dbReference type="UniProtKB" id="P04040"/>
    </source>
</evidence>
<evidence type="ECO:0000250" key="2">
    <source>
        <dbReference type="UniProtKB" id="P15202"/>
    </source>
</evidence>
<evidence type="ECO:0000255" key="3">
    <source>
        <dbReference type="PROSITE-ProRule" id="PRU10013"/>
    </source>
</evidence>
<evidence type="ECO:0000305" key="4"/>
<gene>
    <name type="primary">catA</name>
</gene>
<proteinExistence type="evidence at transcript level"/>
<reference key="1">
    <citation type="journal article" date="1997" name="Physiol. Mol. Plant Pathol.">
        <title>Catalase A from Botrytis cinerea is not expressed during infection on tomato leaves.</title>
        <authorList>
            <person name="Van der Vlugt-Bergmans C.J.B."/>
            <person name="Wagemakers C.A.M."/>
            <person name="Dees D.C.T."/>
            <person name="van Kan J.A.L."/>
        </authorList>
        <dbReference type="AGRICOLA" id="IND20605717"/>
    </citation>
    <scope>NUCLEOTIDE SEQUENCE [MRNA]</scope>
    <source>
        <strain>SAS56</strain>
    </source>
</reference>
<accession>P55304</accession>
<name>CATA_BOTFU</name>
<dbReference type="EC" id="1.11.1.6" evidence="3"/>
<dbReference type="EMBL" id="Z54346">
    <property type="protein sequence ID" value="CAA91159.1"/>
    <property type="molecule type" value="mRNA"/>
</dbReference>
<dbReference type="SMR" id="P55304"/>
<dbReference type="GO" id="GO:0005739">
    <property type="term" value="C:mitochondrion"/>
    <property type="evidence" value="ECO:0007669"/>
    <property type="project" value="TreeGrafter"/>
</dbReference>
<dbReference type="GO" id="GO:0005782">
    <property type="term" value="C:peroxisomal matrix"/>
    <property type="evidence" value="ECO:0007669"/>
    <property type="project" value="UniProtKB-SubCell"/>
</dbReference>
<dbReference type="GO" id="GO:0004096">
    <property type="term" value="F:catalase activity"/>
    <property type="evidence" value="ECO:0007669"/>
    <property type="project" value="UniProtKB-EC"/>
</dbReference>
<dbReference type="GO" id="GO:0020037">
    <property type="term" value="F:heme binding"/>
    <property type="evidence" value="ECO:0007669"/>
    <property type="project" value="InterPro"/>
</dbReference>
<dbReference type="GO" id="GO:0046872">
    <property type="term" value="F:metal ion binding"/>
    <property type="evidence" value="ECO:0007669"/>
    <property type="project" value="UniProtKB-KW"/>
</dbReference>
<dbReference type="GO" id="GO:0042744">
    <property type="term" value="P:hydrogen peroxide catabolic process"/>
    <property type="evidence" value="ECO:0007669"/>
    <property type="project" value="UniProtKB-KW"/>
</dbReference>
<dbReference type="GO" id="GO:0042542">
    <property type="term" value="P:response to hydrogen peroxide"/>
    <property type="evidence" value="ECO:0007669"/>
    <property type="project" value="TreeGrafter"/>
</dbReference>
<dbReference type="Gene3D" id="2.40.180.10">
    <property type="entry name" value="Catalase core domain"/>
    <property type="match status" value="1"/>
</dbReference>
<dbReference type="InterPro" id="IPR018028">
    <property type="entry name" value="Catalase"/>
</dbReference>
<dbReference type="InterPro" id="IPR024708">
    <property type="entry name" value="Catalase_AS"/>
</dbReference>
<dbReference type="InterPro" id="IPR024711">
    <property type="entry name" value="Catalase_clade1/3"/>
</dbReference>
<dbReference type="InterPro" id="IPR011614">
    <property type="entry name" value="Catalase_core"/>
</dbReference>
<dbReference type="InterPro" id="IPR020835">
    <property type="entry name" value="Catalase_sf"/>
</dbReference>
<dbReference type="PANTHER" id="PTHR11465">
    <property type="entry name" value="CATALASE"/>
    <property type="match status" value="1"/>
</dbReference>
<dbReference type="PANTHER" id="PTHR11465:SF9">
    <property type="entry name" value="CATALASE"/>
    <property type="match status" value="1"/>
</dbReference>
<dbReference type="Pfam" id="PF00199">
    <property type="entry name" value="Catalase"/>
    <property type="match status" value="1"/>
</dbReference>
<dbReference type="PIRSF" id="PIRSF038928">
    <property type="entry name" value="Catalase_clade1-3"/>
    <property type="match status" value="1"/>
</dbReference>
<dbReference type="PRINTS" id="PR00067">
    <property type="entry name" value="CATALASE"/>
</dbReference>
<dbReference type="SMART" id="SM01060">
    <property type="entry name" value="Catalase"/>
    <property type="match status" value="1"/>
</dbReference>
<dbReference type="SUPFAM" id="SSF56634">
    <property type="entry name" value="Heme-dependent catalase-like"/>
    <property type="match status" value="1"/>
</dbReference>
<dbReference type="PROSITE" id="PS00438">
    <property type="entry name" value="CATALASE_2"/>
    <property type="match status" value="1"/>
</dbReference>
<dbReference type="PROSITE" id="PS51402">
    <property type="entry name" value="CATALASE_3"/>
    <property type="match status" value="1"/>
</dbReference>
<comment type="function">
    <text evidence="1">Catalyzes the degradation of hydrogen peroxide (H(2)O(2)) generated by peroxisomal oxidases to water and oxygen, thereby protecting cells from the toxic effects of hydrogen peroxide.</text>
</comment>
<comment type="catalytic activity">
    <reaction evidence="3">
        <text>2 H2O2 = O2 + 2 H2O</text>
        <dbReference type="Rhea" id="RHEA:20309"/>
        <dbReference type="ChEBI" id="CHEBI:15377"/>
        <dbReference type="ChEBI" id="CHEBI:15379"/>
        <dbReference type="ChEBI" id="CHEBI:16240"/>
        <dbReference type="EC" id="1.11.1.6"/>
    </reaction>
</comment>
<comment type="cofactor">
    <cofactor evidence="2">
        <name>heme</name>
        <dbReference type="ChEBI" id="CHEBI:30413"/>
    </cofactor>
</comment>
<comment type="subcellular location">
    <subcellularLocation>
        <location evidence="2">Peroxisome matrix</location>
    </subcellularLocation>
</comment>
<comment type="similarity">
    <text evidence="4">Belongs to the catalase family.</text>
</comment>
<keyword id="KW-0349">Heme</keyword>
<keyword id="KW-0376">Hydrogen peroxide</keyword>
<keyword id="KW-0408">Iron</keyword>
<keyword id="KW-0479">Metal-binding</keyword>
<keyword id="KW-0560">Oxidoreductase</keyword>
<keyword id="KW-0575">Peroxidase</keyword>
<keyword id="KW-0576">Peroxisome</keyword>
<organism>
    <name type="scientific">Botryotinia fuckeliana</name>
    <name type="common">Noble rot fungus</name>
    <name type="synonym">Botrytis cinerea</name>
    <dbReference type="NCBI Taxonomy" id="40559"/>
    <lineage>
        <taxon>Eukaryota</taxon>
        <taxon>Fungi</taxon>
        <taxon>Dikarya</taxon>
        <taxon>Ascomycota</taxon>
        <taxon>Pezizomycotina</taxon>
        <taxon>Leotiomycetes</taxon>
        <taxon>Helotiales</taxon>
        <taxon>Sclerotiniaceae</taxon>
        <taxon>Botrytis</taxon>
    </lineage>
</organism>
<sequence>MAQTNGVLQEPAITTMNGAPVLKPASTQRIGNQLRATLLLQDINLLELIQHITHERIPERVVHARGTSAHGYFEVTDDISDVTSAAFLNRVGKQTDIFCRFSTVAGRAESAETVRDTRGFAFKMFTEEGNLDWLFLSTPVFPIRDGAKFPSFTHATKKNPRSGLPDHKAFWDYFTHNQEGIHFLMFLFSDRATPVDFQHADIFSINTYKFTKSDGSFTYVKIHLKTNQGVKNFTQDEANQKAGVDPDFQTRSLYEDIENQKYPTWDVFAQIIDPVKAENYHINIFDATKTFPFSEFPLRKFGKITLNRNVDNFFAEQEQSAFSPTNLVPGWALTPDPIIQTRALAYADTQRYRLGANFVQLPVNAPYKKPFTPLIRDGAATVNGNLGGTPNYFPSSFYNVGAATQYAQPDEEQFQGTVVNFESEVVDADYVQPRIFWEKTLAEEPGQQDNLISNVAGHLSAVTGDKGLGSSTSGLCNVR</sequence>
<protein>
    <recommendedName>
        <fullName>Catalase A</fullName>
        <ecNumber evidence="3">1.11.1.6</ecNumber>
    </recommendedName>
</protein>
<feature type="chain" id="PRO_0000084917" description="Catalase A">
    <location>
        <begin position="1"/>
        <end position="479"/>
    </location>
</feature>
<feature type="active site" evidence="3">
    <location>
        <position position="63"/>
    </location>
</feature>
<feature type="binding site" description="axial binding residue" evidence="1">
    <location>
        <position position="346"/>
    </location>
    <ligand>
        <name>heme</name>
        <dbReference type="ChEBI" id="CHEBI:30413"/>
    </ligand>
    <ligandPart>
        <name>Fe</name>
        <dbReference type="ChEBI" id="CHEBI:18248"/>
    </ligandPart>
</feature>